<gene>
    <name evidence="1" type="primary">eutC</name>
    <name type="ordered locus">SNSL254_A2650</name>
</gene>
<accession>B4T0I5</accession>
<reference key="1">
    <citation type="journal article" date="2011" name="J. Bacteriol.">
        <title>Comparative genomics of 28 Salmonella enterica isolates: evidence for CRISPR-mediated adaptive sublineage evolution.</title>
        <authorList>
            <person name="Fricke W.F."/>
            <person name="Mammel M.K."/>
            <person name="McDermott P.F."/>
            <person name="Tartera C."/>
            <person name="White D.G."/>
            <person name="Leclerc J.E."/>
            <person name="Ravel J."/>
            <person name="Cebula T.A."/>
        </authorList>
    </citation>
    <scope>NUCLEOTIDE SEQUENCE [LARGE SCALE GENOMIC DNA]</scope>
    <source>
        <strain>SL254</strain>
    </source>
</reference>
<keyword id="KW-1283">Bacterial microcompartment</keyword>
<keyword id="KW-0846">Cobalamin</keyword>
<keyword id="KW-0170">Cobalt</keyword>
<keyword id="KW-0456">Lyase</keyword>
<evidence type="ECO:0000255" key="1">
    <source>
        <dbReference type="HAMAP-Rule" id="MF_00601"/>
    </source>
</evidence>
<sequence>MDQKQIEEIVRSVMASMGQDVPQPVAPSTQEGAKPQCAAPTVTESCALDLGSAEAKAWIGVENPHRADVLTELRRSTAARVCTGRAGPRPRTQALLRFLADHSRSKDTVLKEVPEEWVKAQGLLEVRSEISDKNLYLTRPDMGRRLSPEAIDALKSQCVMNPDVQVVVSDGLSTDAITANYEEILPPLLAGLKQAGLNVGTPFFVRYGRVKIEDQIGEILGAKVVILLVGERPGLGQSESLSCYAVYSPRVATTVEADRTCISNIHQGGTPPVEAAAVIVDLAKRMLEQKASGINMTR</sequence>
<comment type="function">
    <text evidence="1">Catalyzes the deamination of various vicinal amino-alcohols to oxo compounds. Allows this organism to utilize ethanolamine as the sole source of nitrogen and carbon in the presence of external vitamin B12.</text>
</comment>
<comment type="catalytic activity">
    <reaction evidence="1">
        <text>ethanolamine = acetaldehyde + NH4(+)</text>
        <dbReference type="Rhea" id="RHEA:15313"/>
        <dbReference type="ChEBI" id="CHEBI:15343"/>
        <dbReference type="ChEBI" id="CHEBI:28938"/>
        <dbReference type="ChEBI" id="CHEBI:57603"/>
        <dbReference type="EC" id="4.3.1.7"/>
    </reaction>
</comment>
<comment type="cofactor">
    <cofactor evidence="1">
        <name>adenosylcob(III)alamin</name>
        <dbReference type="ChEBI" id="CHEBI:18408"/>
    </cofactor>
    <text evidence="1">Binds between the large and small subunits.</text>
</comment>
<comment type="pathway">
    <text evidence="1">Amine and polyamine degradation; ethanolamine degradation.</text>
</comment>
<comment type="subunit">
    <text evidence="1">The basic unit is a heterodimer which dimerizes to form tetramers. The heterotetramers trimerize; 6 large subunits form a core ring with 6 small subunits projecting outwards.</text>
</comment>
<comment type="subcellular location">
    <subcellularLocation>
        <location evidence="1">Bacterial microcompartment</location>
    </subcellularLocation>
</comment>
<comment type="similarity">
    <text evidence="1">Belongs to the EutC family.</text>
</comment>
<organism>
    <name type="scientific">Salmonella newport (strain SL254)</name>
    <dbReference type="NCBI Taxonomy" id="423368"/>
    <lineage>
        <taxon>Bacteria</taxon>
        <taxon>Pseudomonadati</taxon>
        <taxon>Pseudomonadota</taxon>
        <taxon>Gammaproteobacteria</taxon>
        <taxon>Enterobacterales</taxon>
        <taxon>Enterobacteriaceae</taxon>
        <taxon>Salmonella</taxon>
    </lineage>
</organism>
<name>EUTC_SALNS</name>
<dbReference type="EC" id="4.3.1.7" evidence="1"/>
<dbReference type="EMBL" id="CP001113">
    <property type="protein sequence ID" value="ACF65608.1"/>
    <property type="molecule type" value="Genomic_DNA"/>
</dbReference>
<dbReference type="RefSeq" id="WP_000372354.1">
    <property type="nucleotide sequence ID" value="NZ_CCMR01000001.1"/>
</dbReference>
<dbReference type="SMR" id="B4T0I5"/>
<dbReference type="KEGG" id="see:SNSL254_A2650"/>
<dbReference type="HOGENOM" id="CLU_068224_2_0_6"/>
<dbReference type="UniPathway" id="UPA00560"/>
<dbReference type="Proteomes" id="UP000008824">
    <property type="component" value="Chromosome"/>
</dbReference>
<dbReference type="GO" id="GO:0009350">
    <property type="term" value="C:ethanolamine ammonia-lyase complex"/>
    <property type="evidence" value="ECO:0007669"/>
    <property type="project" value="UniProtKB-UniRule"/>
</dbReference>
<dbReference type="GO" id="GO:0031471">
    <property type="term" value="C:ethanolamine degradation polyhedral organelle"/>
    <property type="evidence" value="ECO:0007669"/>
    <property type="project" value="UniProtKB-UniRule"/>
</dbReference>
<dbReference type="GO" id="GO:0031419">
    <property type="term" value="F:cobalamin binding"/>
    <property type="evidence" value="ECO:0007669"/>
    <property type="project" value="UniProtKB-UniRule"/>
</dbReference>
<dbReference type="GO" id="GO:0008851">
    <property type="term" value="F:ethanolamine ammonia-lyase activity"/>
    <property type="evidence" value="ECO:0007669"/>
    <property type="project" value="UniProtKB-UniRule"/>
</dbReference>
<dbReference type="GO" id="GO:0006520">
    <property type="term" value="P:amino acid metabolic process"/>
    <property type="evidence" value="ECO:0007669"/>
    <property type="project" value="InterPro"/>
</dbReference>
<dbReference type="GO" id="GO:0046336">
    <property type="term" value="P:ethanolamine catabolic process"/>
    <property type="evidence" value="ECO:0007669"/>
    <property type="project" value="UniProtKB-UniRule"/>
</dbReference>
<dbReference type="FunFam" id="3.40.50.11240:FF:000001">
    <property type="entry name" value="Ethanolamine ammonia-lyase light chain"/>
    <property type="match status" value="1"/>
</dbReference>
<dbReference type="Gene3D" id="6.10.140.690">
    <property type="match status" value="1"/>
</dbReference>
<dbReference type="Gene3D" id="6.10.250.2060">
    <property type="match status" value="1"/>
</dbReference>
<dbReference type="Gene3D" id="3.40.50.11240">
    <property type="entry name" value="Ethanolamine ammonia-lyase light chain (EutC)"/>
    <property type="match status" value="1"/>
</dbReference>
<dbReference type="HAMAP" id="MF_00601">
    <property type="entry name" value="EutC"/>
    <property type="match status" value="1"/>
</dbReference>
<dbReference type="InterPro" id="IPR009246">
    <property type="entry name" value="EutC"/>
</dbReference>
<dbReference type="InterPro" id="IPR042251">
    <property type="entry name" value="EutC_C"/>
</dbReference>
<dbReference type="NCBIfam" id="NF003971">
    <property type="entry name" value="PRK05465.1"/>
    <property type="match status" value="1"/>
</dbReference>
<dbReference type="PANTHER" id="PTHR39330">
    <property type="entry name" value="ETHANOLAMINE AMMONIA-LYASE LIGHT CHAIN"/>
    <property type="match status" value="1"/>
</dbReference>
<dbReference type="PANTHER" id="PTHR39330:SF1">
    <property type="entry name" value="ETHANOLAMINE AMMONIA-LYASE SMALL SUBUNIT"/>
    <property type="match status" value="1"/>
</dbReference>
<dbReference type="Pfam" id="PF05985">
    <property type="entry name" value="EutC"/>
    <property type="match status" value="1"/>
</dbReference>
<dbReference type="PIRSF" id="PIRSF018982">
    <property type="entry name" value="EutC"/>
    <property type="match status" value="1"/>
</dbReference>
<proteinExistence type="inferred from homology"/>
<feature type="chain" id="PRO_1000130102" description="Ethanolamine ammonia-lyase small subunit">
    <location>
        <begin position="1"/>
        <end position="298"/>
    </location>
</feature>
<feature type="binding site" evidence="1">
    <location>
        <position position="210"/>
    </location>
    <ligand>
        <name>adenosylcob(III)alamin</name>
        <dbReference type="ChEBI" id="CHEBI:18408"/>
    </ligand>
</feature>
<feature type="binding site" evidence="1">
    <location>
        <position position="231"/>
    </location>
    <ligand>
        <name>adenosylcob(III)alamin</name>
        <dbReference type="ChEBI" id="CHEBI:18408"/>
    </ligand>
</feature>
<feature type="binding site" evidence="1">
    <location>
        <position position="261"/>
    </location>
    <ligand>
        <name>adenosylcob(III)alamin</name>
        <dbReference type="ChEBI" id="CHEBI:18408"/>
    </ligand>
</feature>
<protein>
    <recommendedName>
        <fullName evidence="1">Ethanolamine ammonia-lyase small subunit</fullName>
        <shortName evidence="1">EAL small subunit</shortName>
        <ecNumber evidence="1">4.3.1.7</ecNumber>
    </recommendedName>
</protein>